<comment type="function">
    <text evidence="1">Catalyzes the initial step of the lipid cycle reactions in the biosynthesis of the cell wall peptidoglycan: transfers peptidoglycan precursor phospho-MurNAc-pentapeptide from UDP-MurNAc-pentapeptide onto the lipid carrier undecaprenyl phosphate, yielding undecaprenyl-pyrophosphoryl-MurNAc-pentapeptide, known as lipid I.</text>
</comment>
<comment type="catalytic activity">
    <reaction evidence="1">
        <text>UDP-N-acetyl-alpha-D-muramoyl-L-alanyl-gamma-D-glutamyl-meso-2,6-diaminopimeloyl-D-alanyl-D-alanine + di-trans,octa-cis-undecaprenyl phosphate = di-trans,octa-cis-undecaprenyl diphospho-N-acetyl-alpha-D-muramoyl-L-alanyl-D-glutamyl-meso-2,6-diaminopimeloyl-D-alanyl-D-alanine + UMP</text>
        <dbReference type="Rhea" id="RHEA:28386"/>
        <dbReference type="ChEBI" id="CHEBI:57865"/>
        <dbReference type="ChEBI" id="CHEBI:60392"/>
        <dbReference type="ChEBI" id="CHEBI:61386"/>
        <dbReference type="ChEBI" id="CHEBI:61387"/>
        <dbReference type="EC" id="2.7.8.13"/>
    </reaction>
</comment>
<comment type="cofactor">
    <cofactor evidence="1">
        <name>Mg(2+)</name>
        <dbReference type="ChEBI" id="CHEBI:18420"/>
    </cofactor>
</comment>
<comment type="pathway">
    <text evidence="1">Cell wall biogenesis; peptidoglycan biosynthesis.</text>
</comment>
<comment type="subcellular location">
    <subcellularLocation>
        <location evidence="1">Cell inner membrane</location>
        <topology evidence="1">Multi-pass membrane protein</topology>
    </subcellularLocation>
</comment>
<comment type="similarity">
    <text evidence="1">Belongs to the glycosyltransferase 4 family. MraY subfamily.</text>
</comment>
<accession>A1REZ3</accession>
<proteinExistence type="inferred from homology"/>
<evidence type="ECO:0000255" key="1">
    <source>
        <dbReference type="HAMAP-Rule" id="MF_00038"/>
    </source>
</evidence>
<protein>
    <recommendedName>
        <fullName evidence="1">Phospho-N-acetylmuramoyl-pentapeptide-transferase</fullName>
        <ecNumber evidence="1">2.7.8.13</ecNumber>
    </recommendedName>
    <alternativeName>
        <fullName evidence="1">UDP-MurNAc-pentapeptide phosphotransferase</fullName>
    </alternativeName>
</protein>
<gene>
    <name evidence="1" type="primary">mraY</name>
    <name type="ordered locus">Sputw3181_0387</name>
</gene>
<feature type="chain" id="PRO_1000003064" description="Phospho-N-acetylmuramoyl-pentapeptide-transferase">
    <location>
        <begin position="1"/>
        <end position="360"/>
    </location>
</feature>
<feature type="transmembrane region" description="Helical" evidence="1">
    <location>
        <begin position="26"/>
        <end position="46"/>
    </location>
</feature>
<feature type="transmembrane region" description="Helical" evidence="1">
    <location>
        <begin position="74"/>
        <end position="94"/>
    </location>
</feature>
<feature type="transmembrane region" description="Helical" evidence="1">
    <location>
        <begin position="97"/>
        <end position="117"/>
    </location>
</feature>
<feature type="transmembrane region" description="Helical" evidence="1">
    <location>
        <begin position="134"/>
        <end position="154"/>
    </location>
</feature>
<feature type="transmembrane region" description="Helical" evidence="1">
    <location>
        <begin position="168"/>
        <end position="188"/>
    </location>
</feature>
<feature type="transmembrane region" description="Helical" evidence="1">
    <location>
        <begin position="199"/>
        <end position="219"/>
    </location>
</feature>
<feature type="transmembrane region" description="Helical" evidence="1">
    <location>
        <begin position="236"/>
        <end position="256"/>
    </location>
</feature>
<feature type="transmembrane region" description="Helical" evidence="1">
    <location>
        <begin position="263"/>
        <end position="283"/>
    </location>
</feature>
<feature type="transmembrane region" description="Helical" evidence="1">
    <location>
        <begin position="288"/>
        <end position="308"/>
    </location>
</feature>
<feature type="transmembrane region" description="Helical" evidence="1">
    <location>
        <begin position="338"/>
        <end position="358"/>
    </location>
</feature>
<name>MRAY_SHESW</name>
<organism>
    <name type="scientific">Shewanella sp. (strain W3-18-1)</name>
    <dbReference type="NCBI Taxonomy" id="351745"/>
    <lineage>
        <taxon>Bacteria</taxon>
        <taxon>Pseudomonadati</taxon>
        <taxon>Pseudomonadota</taxon>
        <taxon>Gammaproteobacteria</taxon>
        <taxon>Alteromonadales</taxon>
        <taxon>Shewanellaceae</taxon>
        <taxon>Shewanella</taxon>
    </lineage>
</organism>
<keyword id="KW-0131">Cell cycle</keyword>
<keyword id="KW-0132">Cell division</keyword>
<keyword id="KW-0997">Cell inner membrane</keyword>
<keyword id="KW-1003">Cell membrane</keyword>
<keyword id="KW-0133">Cell shape</keyword>
<keyword id="KW-0961">Cell wall biogenesis/degradation</keyword>
<keyword id="KW-0460">Magnesium</keyword>
<keyword id="KW-0472">Membrane</keyword>
<keyword id="KW-0479">Metal-binding</keyword>
<keyword id="KW-0573">Peptidoglycan synthesis</keyword>
<keyword id="KW-0808">Transferase</keyword>
<keyword id="KW-0812">Transmembrane</keyword>
<keyword id="KW-1133">Transmembrane helix</keyword>
<sequence>MLVYLAEYLTRFYTGFNVFSYVTFRAILGLLTALIFSLWWGPKLIERLQLLQIGQVVRNDGPESHFSKRGTPTMGGLLILAAIFISVLLWGDLGSRYVWVMLFVLGSFGLIGFIDDYRKVVRKDTKGLIARWKYILQSLAALLIAFFLYATAANPGETQLVVPFFKDVMPQLGGVFIVLAYFTIVGSSNAVNLTDGLDGLAIMPTVMVAAAFALIAYLSGHVQFANYLHIPHLPGSGELVIVCTAIVGAGLGFLWFNTYPAQVFMGDVGSLSLGAALGAIAVLVRQEILLVIMGGVFVMETVSVILQVGSYKLRGQRIFRMAPIHHHYELKGWPEPRVIVRFWIISIFLVLLGLATLKLR</sequence>
<dbReference type="EC" id="2.7.8.13" evidence="1"/>
<dbReference type="EMBL" id="CP000503">
    <property type="protein sequence ID" value="ABM23238.1"/>
    <property type="molecule type" value="Genomic_DNA"/>
</dbReference>
<dbReference type="RefSeq" id="WP_011787781.1">
    <property type="nucleotide sequence ID" value="NC_008750.1"/>
</dbReference>
<dbReference type="SMR" id="A1REZ3"/>
<dbReference type="KEGG" id="shw:Sputw3181_0387"/>
<dbReference type="HOGENOM" id="CLU_023982_0_0_6"/>
<dbReference type="UniPathway" id="UPA00219"/>
<dbReference type="Proteomes" id="UP000002597">
    <property type="component" value="Chromosome"/>
</dbReference>
<dbReference type="GO" id="GO:0005886">
    <property type="term" value="C:plasma membrane"/>
    <property type="evidence" value="ECO:0007669"/>
    <property type="project" value="UniProtKB-SubCell"/>
</dbReference>
<dbReference type="GO" id="GO:0046872">
    <property type="term" value="F:metal ion binding"/>
    <property type="evidence" value="ECO:0007669"/>
    <property type="project" value="UniProtKB-KW"/>
</dbReference>
<dbReference type="GO" id="GO:0008963">
    <property type="term" value="F:phospho-N-acetylmuramoyl-pentapeptide-transferase activity"/>
    <property type="evidence" value="ECO:0007669"/>
    <property type="project" value="UniProtKB-UniRule"/>
</dbReference>
<dbReference type="GO" id="GO:0051992">
    <property type="term" value="F:UDP-N-acetylmuramoyl-L-alanyl-D-glutamyl-meso-2,6-diaminopimelyl-D-alanyl-D-alanine:undecaprenyl-phosphate transferase activity"/>
    <property type="evidence" value="ECO:0007669"/>
    <property type="project" value="RHEA"/>
</dbReference>
<dbReference type="GO" id="GO:0051301">
    <property type="term" value="P:cell division"/>
    <property type="evidence" value="ECO:0007669"/>
    <property type="project" value="UniProtKB-KW"/>
</dbReference>
<dbReference type="GO" id="GO:0071555">
    <property type="term" value="P:cell wall organization"/>
    <property type="evidence" value="ECO:0007669"/>
    <property type="project" value="UniProtKB-KW"/>
</dbReference>
<dbReference type="GO" id="GO:0009252">
    <property type="term" value="P:peptidoglycan biosynthetic process"/>
    <property type="evidence" value="ECO:0007669"/>
    <property type="project" value="UniProtKB-UniRule"/>
</dbReference>
<dbReference type="GO" id="GO:0008360">
    <property type="term" value="P:regulation of cell shape"/>
    <property type="evidence" value="ECO:0007669"/>
    <property type="project" value="UniProtKB-KW"/>
</dbReference>
<dbReference type="CDD" id="cd06852">
    <property type="entry name" value="GT_MraY"/>
    <property type="match status" value="1"/>
</dbReference>
<dbReference type="HAMAP" id="MF_00038">
    <property type="entry name" value="MraY"/>
    <property type="match status" value="1"/>
</dbReference>
<dbReference type="InterPro" id="IPR000715">
    <property type="entry name" value="Glycosyl_transferase_4"/>
</dbReference>
<dbReference type="InterPro" id="IPR003524">
    <property type="entry name" value="PNAcMuramoyl-5peptid_Trfase"/>
</dbReference>
<dbReference type="InterPro" id="IPR018480">
    <property type="entry name" value="PNAcMuramoyl-5peptid_Trfase_CS"/>
</dbReference>
<dbReference type="NCBIfam" id="TIGR00445">
    <property type="entry name" value="mraY"/>
    <property type="match status" value="1"/>
</dbReference>
<dbReference type="PANTHER" id="PTHR22926">
    <property type="entry name" value="PHOSPHO-N-ACETYLMURAMOYL-PENTAPEPTIDE-TRANSFERASE"/>
    <property type="match status" value="1"/>
</dbReference>
<dbReference type="PANTHER" id="PTHR22926:SF5">
    <property type="entry name" value="PHOSPHO-N-ACETYLMURAMOYL-PENTAPEPTIDE-TRANSFERASE HOMOLOG"/>
    <property type="match status" value="1"/>
</dbReference>
<dbReference type="Pfam" id="PF00953">
    <property type="entry name" value="Glycos_transf_4"/>
    <property type="match status" value="1"/>
</dbReference>
<dbReference type="Pfam" id="PF10555">
    <property type="entry name" value="MraY_sig1"/>
    <property type="match status" value="1"/>
</dbReference>
<dbReference type="PROSITE" id="PS01347">
    <property type="entry name" value="MRAY_1"/>
    <property type="match status" value="1"/>
</dbReference>
<dbReference type="PROSITE" id="PS01348">
    <property type="entry name" value="MRAY_2"/>
    <property type="match status" value="1"/>
</dbReference>
<reference key="1">
    <citation type="submission" date="2006-12" db="EMBL/GenBank/DDBJ databases">
        <title>Complete sequence of Shewanella sp. W3-18-1.</title>
        <authorList>
            <consortium name="US DOE Joint Genome Institute"/>
            <person name="Copeland A."/>
            <person name="Lucas S."/>
            <person name="Lapidus A."/>
            <person name="Barry K."/>
            <person name="Detter J.C."/>
            <person name="Glavina del Rio T."/>
            <person name="Hammon N."/>
            <person name="Israni S."/>
            <person name="Dalin E."/>
            <person name="Tice H."/>
            <person name="Pitluck S."/>
            <person name="Chain P."/>
            <person name="Malfatti S."/>
            <person name="Shin M."/>
            <person name="Vergez L."/>
            <person name="Schmutz J."/>
            <person name="Larimer F."/>
            <person name="Land M."/>
            <person name="Hauser L."/>
            <person name="Kyrpides N."/>
            <person name="Lykidis A."/>
            <person name="Tiedje J."/>
            <person name="Richardson P."/>
        </authorList>
    </citation>
    <scope>NUCLEOTIDE SEQUENCE [LARGE SCALE GENOMIC DNA]</scope>
    <source>
        <strain>W3-18-1</strain>
    </source>
</reference>